<protein>
    <recommendedName>
        <fullName>Galactose/lactose metabolism regulatory protein GAL80</fullName>
    </recommendedName>
</protein>
<reference key="1">
    <citation type="journal article" date="1984" name="Nucleic Acids Res.">
        <title>Nucleotide sequence of the yeast regulatory gene GAL80.</title>
        <authorList>
            <person name="Nogi Y."/>
            <person name="Fukasawa T."/>
        </authorList>
    </citation>
    <scope>NUCLEOTIDE SEQUENCE [GENOMIC DNA]</scope>
</reference>
<reference key="2">
    <citation type="journal article" date="1997" name="Nature">
        <title>The nucleotide sequence of Saccharomyces cerevisiae chromosome XIII.</title>
        <authorList>
            <person name="Bowman S."/>
            <person name="Churcher C.M."/>
            <person name="Badcock K."/>
            <person name="Brown D."/>
            <person name="Chillingworth T."/>
            <person name="Connor R."/>
            <person name="Dedman K."/>
            <person name="Devlin K."/>
            <person name="Gentles S."/>
            <person name="Hamlin N."/>
            <person name="Hunt S."/>
            <person name="Jagels K."/>
            <person name="Lye G."/>
            <person name="Moule S."/>
            <person name="Odell C."/>
            <person name="Pearson D."/>
            <person name="Rajandream M.A."/>
            <person name="Rice P."/>
            <person name="Skelton J."/>
            <person name="Walsh S.V."/>
            <person name="Whitehead S."/>
            <person name="Barrell B.G."/>
        </authorList>
    </citation>
    <scope>NUCLEOTIDE SEQUENCE [LARGE SCALE GENOMIC DNA]</scope>
    <source>
        <strain>ATCC 204508 / S288c</strain>
    </source>
</reference>
<reference key="3">
    <citation type="journal article" date="2014" name="G3 (Bethesda)">
        <title>The reference genome sequence of Saccharomyces cerevisiae: Then and now.</title>
        <authorList>
            <person name="Engel S.R."/>
            <person name="Dietrich F.S."/>
            <person name="Fisk D.G."/>
            <person name="Binkley G."/>
            <person name="Balakrishnan R."/>
            <person name="Costanzo M.C."/>
            <person name="Dwight S.S."/>
            <person name="Hitz B.C."/>
            <person name="Karra K."/>
            <person name="Nash R.S."/>
            <person name="Weng S."/>
            <person name="Wong E.D."/>
            <person name="Lloyd P."/>
            <person name="Skrzypek M.S."/>
            <person name="Miyasato S.R."/>
            <person name="Simison M."/>
            <person name="Cherry J.M."/>
        </authorList>
    </citation>
    <scope>GENOME REANNOTATION</scope>
    <source>
        <strain>ATCC 204508 / S288c</strain>
    </source>
</reference>
<reference key="4">
    <citation type="journal article" date="1991" name="J. Biol. Chem.">
        <title>Purification and characterization of the yeast negative regulatory protein GAL80.</title>
        <authorList>
            <person name="Yun S.-J."/>
            <person name="Hiraoka Y."/>
            <person name="Nishizawa M."/>
            <person name="Takio K."/>
            <person name="Titani K."/>
            <person name="Nogi Y."/>
            <person name="Fukasawa T."/>
        </authorList>
    </citation>
    <scope>PROTEIN SEQUENCE OF 29-33; 162-171 AND 410-416</scope>
    <scope>FUNCTION</scope>
    <scope>SUBUNIT</scope>
    <scope>ACETYLATION AT MET-1</scope>
</reference>
<reference key="5">
    <citation type="journal article" date="2003" name="Nature">
        <title>Global analysis of protein expression in yeast.</title>
        <authorList>
            <person name="Ghaemmaghami S."/>
            <person name="Huh W.-K."/>
            <person name="Bower K."/>
            <person name="Howson R.W."/>
            <person name="Belle A."/>
            <person name="Dephoure N."/>
            <person name="O'Shea E.K."/>
            <person name="Weissman J.S."/>
        </authorList>
    </citation>
    <scope>LEVEL OF PROTEIN EXPRESSION [LARGE SCALE ANALYSIS]</scope>
</reference>
<reference key="6">
    <citation type="journal article" date="2009" name="Science">
        <title>Global analysis of Cdk1 substrate phosphorylation sites provides insights into evolution.</title>
        <authorList>
            <person name="Holt L.J."/>
            <person name="Tuch B.B."/>
            <person name="Villen J."/>
            <person name="Johnson A.D."/>
            <person name="Gygi S.P."/>
            <person name="Morgan D.O."/>
        </authorList>
    </citation>
    <scope>IDENTIFICATION BY MASS SPECTROMETRY [LARGE SCALE ANALYSIS]</scope>
</reference>
<name>GAL80_YEAST</name>
<gene>
    <name type="primary">GAL80</name>
    <name type="ordered locus">YML051W</name>
    <name type="ORF">YM9827.01</name>
    <name type="ORF">YM9958.12</name>
</gene>
<evidence type="ECO:0000269" key="1">
    <source>
    </source>
</evidence>
<evidence type="ECO:0000269" key="2">
    <source>
    </source>
</evidence>
<evidence type="ECO:0000305" key="3"/>
<evidence type="ECO:0007829" key="4">
    <source>
        <dbReference type="PDB" id="3BTS"/>
    </source>
</evidence>
<evidence type="ECO:0007829" key="5">
    <source>
        <dbReference type="PDB" id="3BTV"/>
    </source>
</evidence>
<evidence type="ECO:0007829" key="6">
    <source>
        <dbReference type="PDB" id="3V2U"/>
    </source>
</evidence>
<accession>P04387</accession>
<accession>D6VZC4</accession>
<comment type="function">
    <text evidence="2">This protein is a negative regulator for the gene expression of the lactose/galactose metabolic genes. It binds to GAL4 and so blocks transcriptional activation by it, in the absence of an inducing sugar.</text>
</comment>
<comment type="subunit">
    <text evidence="2">Monomer.</text>
</comment>
<comment type="interaction">
    <interactant intactId="EBI-2061197">
        <id>P04387</id>
    </interactant>
    <interactant intactId="EBI-7272">
        <id>P04385</id>
        <label>GAL1</label>
    </interactant>
    <organismsDiffer>false</organismsDiffer>
    <experiments>2</experiments>
</comment>
<comment type="interaction">
    <interactant intactId="EBI-2061197">
        <id>P04387</id>
    </interactant>
    <interactant intactId="EBI-7282">
        <id>P13045</id>
        <label>GAL3</label>
    </interactant>
    <organismsDiffer>false</organismsDiffer>
    <experiments>5</experiments>
</comment>
<comment type="interaction">
    <interactant intactId="EBI-2061197">
        <id>P04387</id>
    </interactant>
    <interactant intactId="EBI-4407660">
        <id>P04386</id>
        <label>GAL4</label>
    </interactant>
    <organismsDiffer>false</organismsDiffer>
    <experiments>3</experiments>
</comment>
<comment type="interaction">
    <interactant intactId="EBI-2061197">
        <id>P04387</id>
    </interactant>
    <interactant intactId="EBI-2061197">
        <id>P04387</id>
        <label>GAL80</label>
    </interactant>
    <organismsDiffer>false</organismsDiffer>
    <experiments>7</experiments>
</comment>
<comment type="miscellaneous">
    <text evidence="1">Present with 784 molecules/cell in log phase SD medium.</text>
</comment>
<comment type="similarity">
    <text evidence="3">To K.lactis GAL80.</text>
</comment>
<keyword id="KW-0002">3D-structure</keyword>
<keyword id="KW-0007">Acetylation</keyword>
<keyword id="KW-0119">Carbohydrate metabolism</keyword>
<keyword id="KW-0903">Direct protein sequencing</keyword>
<keyword id="KW-0238">DNA-binding</keyword>
<keyword id="KW-0299">Galactose metabolism</keyword>
<keyword id="KW-1185">Reference proteome</keyword>
<keyword id="KW-0678">Repressor</keyword>
<keyword id="KW-0804">Transcription</keyword>
<keyword id="KW-0805">Transcription regulation</keyword>
<proteinExistence type="evidence at protein level"/>
<feature type="chain" id="PRO_0000087427" description="Galactose/lactose metabolism regulatory protein GAL80">
    <location>
        <begin position="1"/>
        <end position="435"/>
    </location>
</feature>
<feature type="modified residue" description="N-acetylmethionine" evidence="2">
    <location>
        <position position="1"/>
    </location>
</feature>
<feature type="sequence conflict" description="In Ref. 1; CAA25827." evidence="3" ref="1">
    <original>E</original>
    <variation>D</variation>
    <location>
        <position position="101"/>
    </location>
</feature>
<feature type="strand" evidence="5">
    <location>
        <begin position="18"/>
        <end position="24"/>
    </location>
</feature>
<feature type="strand" evidence="5">
    <location>
        <begin position="29"/>
        <end position="31"/>
    </location>
</feature>
<feature type="turn" evidence="5">
    <location>
        <begin position="32"/>
        <end position="35"/>
    </location>
</feature>
<feature type="helix" evidence="5">
    <location>
        <begin position="36"/>
        <end position="42"/>
    </location>
</feature>
<feature type="turn" evidence="5">
    <location>
        <begin position="43"/>
        <end position="46"/>
    </location>
</feature>
<feature type="strand" evidence="5">
    <location>
        <begin position="47"/>
        <end position="53"/>
    </location>
</feature>
<feature type="helix" evidence="5">
    <location>
        <begin position="57"/>
        <end position="66"/>
    </location>
</feature>
<feature type="strand" evidence="6">
    <location>
        <begin position="73"/>
        <end position="77"/>
    </location>
</feature>
<feature type="helix" evidence="5">
    <location>
        <begin position="78"/>
        <end position="83"/>
    </location>
</feature>
<feature type="strand" evidence="5">
    <location>
        <begin position="88"/>
        <end position="92"/>
    </location>
</feature>
<feature type="helix" evidence="5">
    <location>
        <begin position="96"/>
        <end position="98"/>
    </location>
</feature>
<feature type="helix" evidence="5">
    <location>
        <begin position="99"/>
        <end position="109"/>
    </location>
</feature>
<feature type="helix" evidence="5">
    <location>
        <begin position="110"/>
        <end position="112"/>
    </location>
</feature>
<feature type="strand" evidence="5">
    <location>
        <begin position="118"/>
        <end position="124"/>
    </location>
</feature>
<feature type="helix" evidence="5">
    <location>
        <begin position="129"/>
        <end position="140"/>
    </location>
</feature>
<feature type="strand" evidence="5">
    <location>
        <begin position="145"/>
        <end position="149"/>
    </location>
</feature>
<feature type="helix" evidence="5">
    <location>
        <begin position="151"/>
        <end position="154"/>
    </location>
</feature>
<feature type="helix" evidence="5">
    <location>
        <begin position="156"/>
        <end position="166"/>
    </location>
</feature>
<feature type="turn" evidence="5">
    <location>
        <begin position="167"/>
        <end position="170"/>
    </location>
</feature>
<feature type="strand" evidence="5">
    <location>
        <begin position="172"/>
        <end position="181"/>
    </location>
</feature>
<feature type="strand" evidence="5">
    <location>
        <begin position="183"/>
        <end position="190"/>
    </location>
</feature>
<feature type="helix" evidence="5">
    <location>
        <begin position="195"/>
        <end position="198"/>
    </location>
</feature>
<feature type="turn" evidence="5">
    <location>
        <begin position="206"/>
        <end position="209"/>
    </location>
</feature>
<feature type="helix" evidence="5">
    <location>
        <begin position="210"/>
        <end position="222"/>
    </location>
</feature>
<feature type="strand" evidence="5">
    <location>
        <begin position="226"/>
        <end position="234"/>
    </location>
</feature>
<feature type="strand" evidence="5">
    <location>
        <begin position="238"/>
        <end position="243"/>
    </location>
</feature>
<feature type="strand" evidence="4">
    <location>
        <begin position="245"/>
        <end position="247"/>
    </location>
</feature>
<feature type="strand" evidence="5">
    <location>
        <begin position="249"/>
        <end position="255"/>
    </location>
</feature>
<feature type="strand" evidence="5">
    <location>
        <begin position="260"/>
        <end position="268"/>
    </location>
</feature>
<feature type="turn" evidence="5">
    <location>
        <begin position="269"/>
        <end position="272"/>
    </location>
</feature>
<feature type="strand" evidence="5">
    <location>
        <begin position="273"/>
        <end position="282"/>
    </location>
</feature>
<feature type="strand" evidence="6">
    <location>
        <begin position="287"/>
        <end position="289"/>
    </location>
</feature>
<feature type="strand" evidence="5">
    <location>
        <begin position="291"/>
        <end position="300"/>
    </location>
</feature>
<feature type="strand" evidence="5">
    <location>
        <begin position="302"/>
        <end position="306"/>
    </location>
</feature>
<feature type="helix" evidence="6">
    <location>
        <begin position="312"/>
        <end position="314"/>
    </location>
</feature>
<feature type="strand" evidence="5">
    <location>
        <begin position="316"/>
        <end position="322"/>
    </location>
</feature>
<feature type="strand" evidence="5">
    <location>
        <begin position="348"/>
        <end position="353"/>
    </location>
</feature>
<feature type="helix" evidence="5">
    <location>
        <begin position="360"/>
        <end position="376"/>
    </location>
</feature>
<feature type="turn" evidence="5">
    <location>
        <begin position="377"/>
        <end position="380"/>
    </location>
</feature>
<feature type="strand" evidence="5">
    <location>
        <begin position="396"/>
        <end position="398"/>
    </location>
</feature>
<feature type="helix" evidence="5">
    <location>
        <begin position="402"/>
        <end position="421"/>
    </location>
</feature>
<feature type="turn" evidence="5">
    <location>
        <begin position="428"/>
        <end position="432"/>
    </location>
</feature>
<sequence length="435" mass="48323">MDYNKRSSVSTVPNAAPIRVGFVGLNAAKGWAIKTHYPAILQLSSQFQITALYSPKIETSIATIQRLKLSNATAFPTLESFASSSTIDMIVIAIQVASHYEVVMPLLEFSKNNPNLKYLFVEWALACSLDQAESIYKAAAERGVQTIISLQGRKSPYILRAKELISQGYIGDINSIEIAGNGGWYGYERPVKSPKYIYEIGNGVDLVTTTFGHTIDILQYMTSSYFSRINAMVFNNIPEQELIDERGNRLGQRVPKTVPDHLLFQGTLLNGNVPVSCSFKGGKPTKKFTKNLVIDIHGTKGDLKLEGDAGFAEISNLVLYYSGTRANDFPLANGQQAPLDPGYDAGKEIMEVYHLRNYNAIVGNIHRLYQSISDFHFNTKKIPELPSQFVMQGFDFEGFPTLMDALILHRLIESVYKSNMMGSTLNVSNISHYSL</sequence>
<dbReference type="EMBL" id="X01667">
    <property type="protein sequence ID" value="CAA25827.1"/>
    <property type="molecule type" value="Genomic_DNA"/>
</dbReference>
<dbReference type="EMBL" id="Z46729">
    <property type="protein sequence ID" value="CAA86725.1"/>
    <property type="molecule type" value="Genomic_DNA"/>
</dbReference>
<dbReference type="EMBL" id="Z47816">
    <property type="protein sequence ID" value="CAA87823.1"/>
    <property type="molecule type" value="Genomic_DNA"/>
</dbReference>
<dbReference type="EMBL" id="BK006946">
    <property type="protein sequence ID" value="DAA09848.1"/>
    <property type="molecule type" value="Genomic_DNA"/>
</dbReference>
<dbReference type="PIR" id="A03606">
    <property type="entry name" value="RGBYG8"/>
</dbReference>
<dbReference type="RefSeq" id="NP_013661.1">
    <property type="nucleotide sequence ID" value="NM_001182409.1"/>
</dbReference>
<dbReference type="PDB" id="3BTS">
    <property type="method" value="X-ray"/>
    <property type="resolution" value="2.70 A"/>
    <property type="chains" value="A/B=1-435"/>
</dbReference>
<dbReference type="PDB" id="3BTU">
    <property type="method" value="X-ray"/>
    <property type="resolution" value="2.85 A"/>
    <property type="chains" value="A/B/C/D/E/F=1-435"/>
</dbReference>
<dbReference type="PDB" id="3BTV">
    <property type="method" value="X-ray"/>
    <property type="resolution" value="2.10 A"/>
    <property type="chains" value="A/B=1-435"/>
</dbReference>
<dbReference type="PDB" id="3V2U">
    <property type="method" value="X-ray"/>
    <property type="resolution" value="2.10 A"/>
    <property type="chains" value="A/B=1-435"/>
</dbReference>
<dbReference type="PDBsum" id="3BTS"/>
<dbReference type="PDBsum" id="3BTU"/>
<dbReference type="PDBsum" id="3BTV"/>
<dbReference type="PDBsum" id="3V2U"/>
<dbReference type="SMR" id="P04387"/>
<dbReference type="BioGRID" id="35117">
    <property type="interactions" value="235"/>
</dbReference>
<dbReference type="ComplexPortal" id="CPX-1042">
    <property type="entry name" value="GAL3-GAL80 transcription regulation complex"/>
</dbReference>
<dbReference type="ComplexPortal" id="CPX-1043">
    <property type="entry name" value="GAL1-GAL80 transcription regulation complex"/>
</dbReference>
<dbReference type="ComplexPortal" id="CPX-1044">
    <property type="entry name" value="GAL4-GAL80 transcription repressor complex"/>
</dbReference>
<dbReference type="DIP" id="DIP-594N"/>
<dbReference type="FunCoup" id="P04387">
    <property type="interactions" value="487"/>
</dbReference>
<dbReference type="IntAct" id="P04387">
    <property type="interactions" value="39"/>
</dbReference>
<dbReference type="MINT" id="P04387"/>
<dbReference type="STRING" id="4932.YML051W"/>
<dbReference type="iPTMnet" id="P04387"/>
<dbReference type="PaxDb" id="4932-YML051W"/>
<dbReference type="PeptideAtlas" id="P04387"/>
<dbReference type="EnsemblFungi" id="YML051W_mRNA">
    <property type="protein sequence ID" value="YML051W"/>
    <property type="gene ID" value="YML051W"/>
</dbReference>
<dbReference type="GeneID" id="854954"/>
<dbReference type="KEGG" id="sce:YML051W"/>
<dbReference type="AGR" id="SGD:S000004515"/>
<dbReference type="SGD" id="S000004515">
    <property type="gene designation" value="GAL80"/>
</dbReference>
<dbReference type="VEuPathDB" id="FungiDB:YML051W"/>
<dbReference type="eggNOG" id="KOG2741">
    <property type="taxonomic scope" value="Eukaryota"/>
</dbReference>
<dbReference type="HOGENOM" id="CLU_023194_25_0_1"/>
<dbReference type="InParanoid" id="P04387"/>
<dbReference type="OMA" id="KVPHHRE"/>
<dbReference type="OrthoDB" id="64915at2759"/>
<dbReference type="BioCyc" id="YEAST:G3O-32648-MONOMER"/>
<dbReference type="BioGRID-ORCS" id="854954">
    <property type="hits" value="3 hits in 10 CRISPR screens"/>
</dbReference>
<dbReference type="EvolutionaryTrace" id="P04387"/>
<dbReference type="PRO" id="PR:P04387"/>
<dbReference type="Proteomes" id="UP000002311">
    <property type="component" value="Chromosome XIII"/>
</dbReference>
<dbReference type="RNAct" id="P04387">
    <property type="molecule type" value="protein"/>
</dbReference>
<dbReference type="GO" id="GO:0005737">
    <property type="term" value="C:cytoplasm"/>
    <property type="evidence" value="ECO:0000314"/>
    <property type="project" value="SGD"/>
</dbReference>
<dbReference type="GO" id="GO:0005634">
    <property type="term" value="C:nucleus"/>
    <property type="evidence" value="ECO:0000314"/>
    <property type="project" value="SGD"/>
</dbReference>
<dbReference type="GO" id="GO:0005667">
    <property type="term" value="C:transcription regulator complex"/>
    <property type="evidence" value="ECO:0000353"/>
    <property type="project" value="ComplexPortal"/>
</dbReference>
<dbReference type="GO" id="GO:0017053">
    <property type="term" value="C:transcription repressor complex"/>
    <property type="evidence" value="ECO:0000303"/>
    <property type="project" value="ComplexPortal"/>
</dbReference>
<dbReference type="GO" id="GO:0003677">
    <property type="term" value="F:DNA binding"/>
    <property type="evidence" value="ECO:0007669"/>
    <property type="project" value="UniProtKB-KW"/>
</dbReference>
<dbReference type="GO" id="GO:0042802">
    <property type="term" value="F:identical protein binding"/>
    <property type="evidence" value="ECO:0000353"/>
    <property type="project" value="IntAct"/>
</dbReference>
<dbReference type="GO" id="GO:0019210">
    <property type="term" value="F:kinase inhibitor activity"/>
    <property type="evidence" value="ECO:0000314"/>
    <property type="project" value="SGD"/>
</dbReference>
<dbReference type="GO" id="GO:0000166">
    <property type="term" value="F:nucleotide binding"/>
    <property type="evidence" value="ECO:0007669"/>
    <property type="project" value="InterPro"/>
</dbReference>
<dbReference type="GO" id="GO:0061629">
    <property type="term" value="F:RNA polymerase II-specific DNA-binding transcription factor binding"/>
    <property type="evidence" value="ECO:0000314"/>
    <property type="project" value="SGD"/>
</dbReference>
<dbReference type="GO" id="GO:0006012">
    <property type="term" value="P:galactose metabolic process"/>
    <property type="evidence" value="ECO:0000315"/>
    <property type="project" value="ComplexPortal"/>
</dbReference>
<dbReference type="GO" id="GO:0000122">
    <property type="term" value="P:negative regulation of transcription by RNA polymerase II"/>
    <property type="evidence" value="ECO:0000314"/>
    <property type="project" value="SGD"/>
</dbReference>
<dbReference type="GO" id="GO:0000435">
    <property type="term" value="P:positive regulation of transcription from RNA polymerase II promoter by galactose"/>
    <property type="evidence" value="ECO:0000315"/>
    <property type="project" value="ComplexPortal"/>
</dbReference>
<dbReference type="GO" id="GO:0000431">
    <property type="term" value="P:regulation of transcription from RNA polymerase II promoter by galactose"/>
    <property type="evidence" value="ECO:0000315"/>
    <property type="project" value="ComplexPortal"/>
</dbReference>
<dbReference type="FunFam" id="3.40.50.720:FF:000738">
    <property type="entry name" value="Galactose/lactose metabolism regulatory protein GAL80"/>
    <property type="match status" value="1"/>
</dbReference>
<dbReference type="Gene3D" id="3.30.360.10">
    <property type="entry name" value="Dihydrodipicolinate Reductase, domain 2"/>
    <property type="match status" value="1"/>
</dbReference>
<dbReference type="Gene3D" id="3.40.50.720">
    <property type="entry name" value="NAD(P)-binding Rossmann-like Domain"/>
    <property type="match status" value="2"/>
</dbReference>
<dbReference type="InterPro" id="IPR055080">
    <property type="entry name" value="Gal80p-like_C"/>
</dbReference>
<dbReference type="InterPro" id="IPR000683">
    <property type="entry name" value="Gfo/Idh/MocA-like_OxRdtase_N"/>
</dbReference>
<dbReference type="InterPro" id="IPR051317">
    <property type="entry name" value="Gfo/Idh/MocA_oxidoreduct"/>
</dbReference>
<dbReference type="InterPro" id="IPR036291">
    <property type="entry name" value="NAD(P)-bd_dom_sf"/>
</dbReference>
<dbReference type="PANTHER" id="PTHR43708">
    <property type="entry name" value="CONSERVED EXPRESSED OXIDOREDUCTASE (EUROFUNG)"/>
    <property type="match status" value="1"/>
</dbReference>
<dbReference type="PANTHER" id="PTHR43708:SF1">
    <property type="entry name" value="GALACTOSE_LACTOSE METABOLISM REGULATORY PROTEIN GAL80"/>
    <property type="match status" value="1"/>
</dbReference>
<dbReference type="Pfam" id="PF22685">
    <property type="entry name" value="Gal80p_C-like"/>
    <property type="match status" value="1"/>
</dbReference>
<dbReference type="Pfam" id="PF01408">
    <property type="entry name" value="GFO_IDH_MocA"/>
    <property type="match status" value="1"/>
</dbReference>
<dbReference type="SUPFAM" id="SSF55347">
    <property type="entry name" value="Glyceraldehyde-3-phosphate dehydrogenase-like, C-terminal domain"/>
    <property type="match status" value="1"/>
</dbReference>
<dbReference type="SUPFAM" id="SSF51735">
    <property type="entry name" value="NAD(P)-binding Rossmann-fold domains"/>
    <property type="match status" value="2"/>
</dbReference>
<organism>
    <name type="scientific">Saccharomyces cerevisiae (strain ATCC 204508 / S288c)</name>
    <name type="common">Baker's yeast</name>
    <dbReference type="NCBI Taxonomy" id="559292"/>
    <lineage>
        <taxon>Eukaryota</taxon>
        <taxon>Fungi</taxon>
        <taxon>Dikarya</taxon>
        <taxon>Ascomycota</taxon>
        <taxon>Saccharomycotina</taxon>
        <taxon>Saccharomycetes</taxon>
        <taxon>Saccharomycetales</taxon>
        <taxon>Saccharomycetaceae</taxon>
        <taxon>Saccharomyces</taxon>
    </lineage>
</organism>